<dbReference type="EC" id="2.3.1.48" evidence="3"/>
<dbReference type="EC" id="2.3.1.-" evidence="2 3"/>
<dbReference type="EMBL" id="CM002239">
    <property type="protein sequence ID" value="EAA32981.1"/>
    <property type="molecule type" value="Genomic_DNA"/>
</dbReference>
<dbReference type="RefSeq" id="XP_962217.1">
    <property type="nucleotide sequence ID" value="XM_957124.2"/>
</dbReference>
<dbReference type="SMR" id="Q7S9B6"/>
<dbReference type="FunCoup" id="Q7S9B6">
    <property type="interactions" value="916"/>
</dbReference>
<dbReference type="STRING" id="367110.Q7S9B6"/>
<dbReference type="PaxDb" id="5141-EFNCRP00000004952"/>
<dbReference type="EnsemblFungi" id="EAA32981">
    <property type="protein sequence ID" value="EAA32981"/>
    <property type="gene ID" value="NCU05218"/>
</dbReference>
<dbReference type="GeneID" id="3878365"/>
<dbReference type="KEGG" id="ncr:NCU05218"/>
<dbReference type="VEuPathDB" id="FungiDB:NCU05218"/>
<dbReference type="HOGENOM" id="CLU_011815_2_0_1"/>
<dbReference type="InParanoid" id="Q7S9B6"/>
<dbReference type="OMA" id="QYQRHGY"/>
<dbReference type="OrthoDB" id="787137at2759"/>
<dbReference type="Proteomes" id="UP000001805">
    <property type="component" value="Chromosome 4, Linkage Group IV"/>
</dbReference>
<dbReference type="GO" id="GO:0000785">
    <property type="term" value="C:chromatin"/>
    <property type="evidence" value="ECO:0000318"/>
    <property type="project" value="GO_Central"/>
</dbReference>
<dbReference type="GO" id="GO:0035267">
    <property type="term" value="C:NuA4 histone acetyltransferase complex"/>
    <property type="evidence" value="ECO:0007669"/>
    <property type="project" value="EnsemblFungi"/>
</dbReference>
<dbReference type="GO" id="GO:0000786">
    <property type="term" value="C:nucleosome"/>
    <property type="evidence" value="ECO:0007669"/>
    <property type="project" value="EnsemblFungi"/>
</dbReference>
<dbReference type="GO" id="GO:0005634">
    <property type="term" value="C:nucleus"/>
    <property type="evidence" value="ECO:0000318"/>
    <property type="project" value="GO_Central"/>
</dbReference>
<dbReference type="GO" id="GO:0032777">
    <property type="term" value="C:piccolo histone acetyltransferase complex"/>
    <property type="evidence" value="ECO:0007669"/>
    <property type="project" value="EnsemblFungi"/>
</dbReference>
<dbReference type="GO" id="GO:0003682">
    <property type="term" value="F:chromatin binding"/>
    <property type="evidence" value="ECO:0000318"/>
    <property type="project" value="GO_Central"/>
</dbReference>
<dbReference type="GO" id="GO:0004402">
    <property type="term" value="F:histone acetyltransferase activity"/>
    <property type="evidence" value="ECO:0000318"/>
    <property type="project" value="GO_Central"/>
</dbReference>
<dbReference type="GO" id="GO:0140068">
    <property type="term" value="F:histone crotonyltransferase activity"/>
    <property type="evidence" value="ECO:0007669"/>
    <property type="project" value="EnsemblFungi"/>
</dbReference>
<dbReference type="GO" id="GO:0010485">
    <property type="term" value="F:histone H4 acetyltransferase activity"/>
    <property type="evidence" value="ECO:0007669"/>
    <property type="project" value="EnsemblFungi"/>
</dbReference>
<dbReference type="GO" id="GO:0106226">
    <property type="term" value="F:peptide 2-hydroxyisobutyryltransferase activity"/>
    <property type="evidence" value="ECO:0007669"/>
    <property type="project" value="RHEA"/>
</dbReference>
<dbReference type="GO" id="GO:0003712">
    <property type="term" value="F:transcription coregulator activity"/>
    <property type="evidence" value="ECO:0000318"/>
    <property type="project" value="GO_Central"/>
</dbReference>
<dbReference type="GO" id="GO:0008270">
    <property type="term" value="F:zinc ion binding"/>
    <property type="evidence" value="ECO:0007669"/>
    <property type="project" value="UniProtKB-KW"/>
</dbReference>
<dbReference type="GO" id="GO:0006281">
    <property type="term" value="P:DNA repair"/>
    <property type="evidence" value="ECO:0007669"/>
    <property type="project" value="UniProtKB-KW"/>
</dbReference>
<dbReference type="GO" id="GO:0006354">
    <property type="term" value="P:DNA-templated transcription elongation"/>
    <property type="evidence" value="ECO:0007669"/>
    <property type="project" value="EnsemblFungi"/>
</dbReference>
<dbReference type="GO" id="GO:0016239">
    <property type="term" value="P:positive regulation of macroautophagy"/>
    <property type="evidence" value="ECO:0007669"/>
    <property type="project" value="EnsemblFungi"/>
</dbReference>
<dbReference type="GO" id="GO:0032968">
    <property type="term" value="P:positive regulation of transcription elongation by RNA polymerase II"/>
    <property type="evidence" value="ECO:0007669"/>
    <property type="project" value="EnsemblFungi"/>
</dbReference>
<dbReference type="GO" id="GO:0010867">
    <property type="term" value="P:positive regulation of triglyceride biosynthetic process"/>
    <property type="evidence" value="ECO:0007669"/>
    <property type="project" value="EnsemblFungi"/>
</dbReference>
<dbReference type="GO" id="GO:0000183">
    <property type="term" value="P:rDNA heterochromatin formation"/>
    <property type="evidence" value="ECO:0007669"/>
    <property type="project" value="EnsemblFungi"/>
</dbReference>
<dbReference type="GO" id="GO:0051726">
    <property type="term" value="P:regulation of cell cycle"/>
    <property type="evidence" value="ECO:0007669"/>
    <property type="project" value="EnsemblFungi"/>
</dbReference>
<dbReference type="GO" id="GO:0006357">
    <property type="term" value="P:regulation of transcription by RNA polymerase II"/>
    <property type="evidence" value="ECO:0000318"/>
    <property type="project" value="GO_Central"/>
</dbReference>
<dbReference type="CDD" id="cd04301">
    <property type="entry name" value="NAT_SF"/>
    <property type="match status" value="1"/>
</dbReference>
<dbReference type="FunFam" id="1.10.10.10:FF:000569">
    <property type="entry name" value="Histone acetyltransferase"/>
    <property type="match status" value="1"/>
</dbReference>
<dbReference type="FunFam" id="2.30.30.140:FF:000154">
    <property type="entry name" value="Histone acetyltransferase"/>
    <property type="match status" value="1"/>
</dbReference>
<dbReference type="FunFam" id="3.30.60.60:FF:000001">
    <property type="entry name" value="Histone acetyltransferase"/>
    <property type="match status" value="1"/>
</dbReference>
<dbReference type="FunFam" id="3.40.630.30:FF:000002">
    <property type="entry name" value="Histone acetyltransferase"/>
    <property type="match status" value="1"/>
</dbReference>
<dbReference type="Gene3D" id="2.30.30.140">
    <property type="match status" value="1"/>
</dbReference>
<dbReference type="Gene3D" id="3.40.630.30">
    <property type="match status" value="1"/>
</dbReference>
<dbReference type="Gene3D" id="3.30.60.60">
    <property type="entry name" value="N-acetyl transferase-like"/>
    <property type="match status" value="1"/>
</dbReference>
<dbReference type="Gene3D" id="1.10.10.10">
    <property type="entry name" value="Winged helix-like DNA-binding domain superfamily/Winged helix DNA-binding domain"/>
    <property type="match status" value="1"/>
</dbReference>
<dbReference type="InterPro" id="IPR016181">
    <property type="entry name" value="Acyl_CoA_acyltransferase"/>
</dbReference>
<dbReference type="InterPro" id="IPR016197">
    <property type="entry name" value="Chromo-like_dom_sf"/>
</dbReference>
<dbReference type="InterPro" id="IPR002717">
    <property type="entry name" value="HAT_MYST-type"/>
</dbReference>
<dbReference type="InterPro" id="IPR050603">
    <property type="entry name" value="MYST_HAT"/>
</dbReference>
<dbReference type="InterPro" id="IPR025995">
    <property type="entry name" value="Tudor-knot"/>
</dbReference>
<dbReference type="InterPro" id="IPR036388">
    <property type="entry name" value="WH-like_DNA-bd_sf"/>
</dbReference>
<dbReference type="InterPro" id="IPR040706">
    <property type="entry name" value="Zf-MYST"/>
</dbReference>
<dbReference type="PANTHER" id="PTHR10615">
    <property type="entry name" value="HISTONE ACETYLTRANSFERASE"/>
    <property type="match status" value="1"/>
</dbReference>
<dbReference type="PANTHER" id="PTHR10615:SF218">
    <property type="entry name" value="HISTONE ACETYLTRANSFERASE ESA1"/>
    <property type="match status" value="1"/>
</dbReference>
<dbReference type="Pfam" id="PF01853">
    <property type="entry name" value="MOZ_SAS"/>
    <property type="match status" value="1"/>
</dbReference>
<dbReference type="Pfam" id="PF11717">
    <property type="entry name" value="Tudor-knot"/>
    <property type="match status" value="1"/>
</dbReference>
<dbReference type="Pfam" id="PF17772">
    <property type="entry name" value="zf-MYST"/>
    <property type="match status" value="1"/>
</dbReference>
<dbReference type="SUPFAM" id="SSF55729">
    <property type="entry name" value="Acyl-CoA N-acyltransferases (Nat)"/>
    <property type="match status" value="1"/>
</dbReference>
<dbReference type="SUPFAM" id="SSF54160">
    <property type="entry name" value="Chromo domain-like"/>
    <property type="match status" value="1"/>
</dbReference>
<dbReference type="PROSITE" id="PS51726">
    <property type="entry name" value="MYST_HAT"/>
    <property type="match status" value="1"/>
</dbReference>
<organism>
    <name type="scientific">Neurospora crassa (strain ATCC 24698 / 74-OR23-1A / CBS 708.71 / DSM 1257 / FGSC 987)</name>
    <dbReference type="NCBI Taxonomy" id="367110"/>
    <lineage>
        <taxon>Eukaryota</taxon>
        <taxon>Fungi</taxon>
        <taxon>Dikarya</taxon>
        <taxon>Ascomycota</taxon>
        <taxon>Pezizomycotina</taxon>
        <taxon>Sordariomycetes</taxon>
        <taxon>Sordariomycetidae</taxon>
        <taxon>Sordariales</taxon>
        <taxon>Sordariaceae</taxon>
        <taxon>Neurospora</taxon>
    </lineage>
</organism>
<protein>
    <recommendedName>
        <fullName>Histone acetyltransferase esa-1</fullName>
        <ecNumber evidence="3">2.3.1.48</ecNumber>
    </recommendedName>
    <alternativeName>
        <fullName>Histone acetyltransferase hat-4</fullName>
    </alternativeName>
    <alternativeName>
        <fullName evidence="7">Protein 2-hydroxyisobutyryltransferase esa-1</fullName>
        <ecNumber evidence="2">2.3.1.-</ecNumber>
    </alternativeName>
    <alternativeName>
        <fullName evidence="7">Protein acetyltransferase esa-1</fullName>
        <ecNumber evidence="3">2.3.1.-</ecNumber>
    </alternativeName>
    <alternativeName>
        <fullName evidence="7">Protein crotonyltransferase esa-1</fullName>
        <ecNumber evidence="3">2.3.1.-</ecNumber>
    </alternativeName>
</protein>
<proteinExistence type="inferred from homology"/>
<name>ESA1_NEUCR</name>
<gene>
    <name type="primary">esa-1</name>
    <name type="synonym">hat-4</name>
    <name type="ORF">NCU05218</name>
</gene>
<keyword id="KW-0007">Acetylation</keyword>
<keyword id="KW-0010">Activator</keyword>
<keyword id="KW-0156">Chromatin regulator</keyword>
<keyword id="KW-0158">Chromosome</keyword>
<keyword id="KW-0227">DNA damage</keyword>
<keyword id="KW-0234">DNA repair</keyword>
<keyword id="KW-0479">Metal-binding</keyword>
<keyword id="KW-0539">Nucleus</keyword>
<keyword id="KW-1185">Reference proteome</keyword>
<keyword id="KW-0804">Transcription</keyword>
<keyword id="KW-0805">Transcription regulation</keyword>
<keyword id="KW-0808">Transferase</keyword>
<keyword id="KW-0862">Zinc</keyword>
<keyword id="KW-0863">Zinc-finger</keyword>
<evidence type="ECO:0000250" key="1"/>
<evidence type="ECO:0000250" key="2">
    <source>
        <dbReference type="UniProtKB" id="O94446"/>
    </source>
</evidence>
<evidence type="ECO:0000250" key="3">
    <source>
        <dbReference type="UniProtKB" id="Q08649"/>
    </source>
</evidence>
<evidence type="ECO:0000255" key="4"/>
<evidence type="ECO:0000255" key="5">
    <source>
        <dbReference type="PROSITE-ProRule" id="PRU01063"/>
    </source>
</evidence>
<evidence type="ECO:0000256" key="6">
    <source>
        <dbReference type="SAM" id="MobiDB-lite"/>
    </source>
</evidence>
<evidence type="ECO:0000305" key="7"/>
<accession>Q7S9B6</accession>
<feature type="chain" id="PRO_0000051559" description="Histone acetyltransferase esa-1">
    <location>
        <begin position="1"/>
        <end position="506"/>
    </location>
</feature>
<feature type="domain" description="Tudor-knot" evidence="4">
    <location>
        <begin position="26"/>
        <end position="78"/>
    </location>
</feature>
<feature type="domain" description="MYST-type HAT" evidence="5">
    <location>
        <begin position="220"/>
        <end position="494"/>
    </location>
</feature>
<feature type="zinc finger region" description="C2HC MYST-type" evidence="5">
    <location>
        <begin position="253"/>
        <end position="278"/>
    </location>
</feature>
<feature type="region of interest" description="Disordered" evidence="6">
    <location>
        <begin position="1"/>
        <end position="24"/>
    </location>
</feature>
<feature type="region of interest" description="Disordered" evidence="6">
    <location>
        <begin position="82"/>
        <end position="215"/>
    </location>
</feature>
<feature type="short sequence motif" description="ESA1-RPD3 motif" evidence="1">
    <location>
        <begin position="303"/>
        <end position="324"/>
    </location>
</feature>
<feature type="compositionally biased region" description="Basic and acidic residues" evidence="6">
    <location>
        <begin position="87"/>
        <end position="98"/>
    </location>
</feature>
<feature type="compositionally biased region" description="Basic residues" evidence="6">
    <location>
        <begin position="109"/>
        <end position="120"/>
    </location>
</feature>
<feature type="compositionally biased region" description="Basic and acidic residues" evidence="6">
    <location>
        <begin position="167"/>
        <end position="178"/>
    </location>
</feature>
<feature type="active site" description="Proton donor/acceptor" evidence="3">
    <location>
        <position position="396"/>
    </location>
</feature>
<feature type="binding site" evidence="3">
    <location>
        <begin position="361"/>
        <end position="365"/>
    </location>
    <ligand>
        <name>acetyl-CoA</name>
        <dbReference type="ChEBI" id="CHEBI:57288"/>
    </ligand>
</feature>
<feature type="binding site" evidence="3">
    <location>
        <begin position="370"/>
        <end position="376"/>
    </location>
    <ligand>
        <name>acetyl-CoA</name>
        <dbReference type="ChEBI" id="CHEBI:57288"/>
    </ligand>
</feature>
<feature type="binding site" evidence="3">
    <location>
        <position position="400"/>
    </location>
    <ligand>
        <name>acetyl-CoA</name>
        <dbReference type="ChEBI" id="CHEBI:57288"/>
    </ligand>
</feature>
<feature type="site" description="Important for catalytic activity" evidence="3">
    <location>
        <position position="362"/>
    </location>
</feature>
<feature type="modified residue" description="N6-acetyllysine; by autocatalysis" evidence="3">
    <location>
        <position position="320"/>
    </location>
</feature>
<sequence>MSPPGGDATVGSDEKRQKGKATPDTIKMGCIAMVMKEGQLRRAEILSIKDTKSGRQFYCNFDNFNKRLDEWVPAARIDFEQDVEWPNPDKDKQKDAKTKKNNSTVSKKQPSKKNNQKKASKREQSVASDGQTPHPWTEFVESQPGKNNRQRGKTEDGTDVNASLEVGGDKGVKRKADEIDMDEDEIPAAKKQRQPSFSREQEIEKLRTSGSMTQNPTEISRIRNISKVEFGRYVLFPWYFSPYPQIFDQEDCIYICEFCLSYYGELKSFVRHRQKCTLHHPPGNEIYRDDYVSFFEIDGRRQRTWCRNLCLLSKMFLDHKTLYYDVDPFLFYVMTTRDDRGCHIIGYFSKEKESTDGYNVACILTLPQYQRKGYGRLLIQFSYELSKIEGKLGSPEKPLSDLGLLSYRQYWSENIIDILLGYNERKEACTIENIAVALAMTTQDVEHTLQALKMQVYHKGEHKIVVPEKLIKQREKSKAKQKRLIDPERIQWKPPVFTALNRTWGW</sequence>
<reference key="1">
    <citation type="journal article" date="2003" name="Nature">
        <title>The genome sequence of the filamentous fungus Neurospora crassa.</title>
        <authorList>
            <person name="Galagan J.E."/>
            <person name="Calvo S.E."/>
            <person name="Borkovich K.A."/>
            <person name="Selker E.U."/>
            <person name="Read N.D."/>
            <person name="Jaffe D.B."/>
            <person name="FitzHugh W."/>
            <person name="Ma L.-J."/>
            <person name="Smirnov S."/>
            <person name="Purcell S."/>
            <person name="Rehman B."/>
            <person name="Elkins T."/>
            <person name="Engels R."/>
            <person name="Wang S."/>
            <person name="Nielsen C.B."/>
            <person name="Butler J."/>
            <person name="Endrizzi M."/>
            <person name="Qui D."/>
            <person name="Ianakiev P."/>
            <person name="Bell-Pedersen D."/>
            <person name="Nelson M.A."/>
            <person name="Werner-Washburne M."/>
            <person name="Selitrennikoff C.P."/>
            <person name="Kinsey J.A."/>
            <person name="Braun E.L."/>
            <person name="Zelter A."/>
            <person name="Schulte U."/>
            <person name="Kothe G.O."/>
            <person name="Jedd G."/>
            <person name="Mewes H.-W."/>
            <person name="Staben C."/>
            <person name="Marcotte E."/>
            <person name="Greenberg D."/>
            <person name="Roy A."/>
            <person name="Foley K."/>
            <person name="Naylor J."/>
            <person name="Stange-Thomann N."/>
            <person name="Barrett R."/>
            <person name="Gnerre S."/>
            <person name="Kamal M."/>
            <person name="Kamvysselis M."/>
            <person name="Mauceli E.W."/>
            <person name="Bielke C."/>
            <person name="Rudd S."/>
            <person name="Frishman D."/>
            <person name="Krystofova S."/>
            <person name="Rasmussen C."/>
            <person name="Metzenberg R.L."/>
            <person name="Perkins D.D."/>
            <person name="Kroken S."/>
            <person name="Cogoni C."/>
            <person name="Macino G."/>
            <person name="Catcheside D.E.A."/>
            <person name="Li W."/>
            <person name="Pratt R.J."/>
            <person name="Osmani S.A."/>
            <person name="DeSouza C.P.C."/>
            <person name="Glass N.L."/>
            <person name="Orbach M.J."/>
            <person name="Berglund J.A."/>
            <person name="Voelker R."/>
            <person name="Yarden O."/>
            <person name="Plamann M."/>
            <person name="Seiler S."/>
            <person name="Dunlap J.C."/>
            <person name="Radford A."/>
            <person name="Aramayo R."/>
            <person name="Natvig D.O."/>
            <person name="Alex L.A."/>
            <person name="Mannhaupt G."/>
            <person name="Ebbole D.J."/>
            <person name="Freitag M."/>
            <person name="Paulsen I."/>
            <person name="Sachs M.S."/>
            <person name="Lander E.S."/>
            <person name="Nusbaum C."/>
            <person name="Birren B.W."/>
        </authorList>
    </citation>
    <scope>NUCLEOTIDE SEQUENCE [LARGE SCALE GENOMIC DNA]</scope>
    <source>
        <strain>ATCC 24698 / 74-OR23-1A / CBS 708.71 / DSM 1257 / FGSC 987</strain>
    </source>
</reference>
<comment type="function">
    <text evidence="2 3">Catalytic component of the NuA4 histone acetyltransferase (HAT) complex which is involved in epigenetic transcriptional activation of selected genes principally by acetylation of nucleosomal histones H4, H3, H2B, H2A and H2A variant H2A.Z (By similarity). Acetylates histone H4 to form H4K5ac, H4K8ac, H4K12ac and H4K16ac, histone H3 to form H3K14ac, and histone H2A to form H2AK4ac and H2AK7ac (By similarity). The NuA4 complex is involved in the DNA damage response and is required for chromosome segregation. The NuA4 complex plays a direct role in repair of DNA double-strand breaks (DSBs) through homologous recombination (By similarity). Recruitment to promoters depends on H3K4me. Also acetylates non-histone proteins (By similarity). In addition to protein acetyltransferase, can use different acyl-CoA substrates, such as 2-hydroxyisobutanoyl-CoA (2-hydroxyisobutyryl-CoA) or (2E)-butenoyl-CoA (crotonyl-CoA), and is able to mediate protein 2-hydroxyisobutyrylation and crotonylation, respectively (By similarity).</text>
</comment>
<comment type="catalytic activity">
    <reaction evidence="2">
        <text>L-lysyl-[histone] + acetyl-CoA = N(6)-acetyl-L-lysyl-[histone] + CoA + H(+)</text>
        <dbReference type="Rhea" id="RHEA:21992"/>
        <dbReference type="Rhea" id="RHEA-COMP:9845"/>
        <dbReference type="Rhea" id="RHEA-COMP:11338"/>
        <dbReference type="ChEBI" id="CHEBI:15378"/>
        <dbReference type="ChEBI" id="CHEBI:29969"/>
        <dbReference type="ChEBI" id="CHEBI:57287"/>
        <dbReference type="ChEBI" id="CHEBI:57288"/>
        <dbReference type="ChEBI" id="CHEBI:61930"/>
        <dbReference type="EC" id="2.3.1.48"/>
    </reaction>
    <physiologicalReaction direction="left-to-right" evidence="2">
        <dbReference type="Rhea" id="RHEA:21993"/>
    </physiologicalReaction>
</comment>
<comment type="catalytic activity">
    <reaction evidence="3">
        <text>L-lysyl-[protein] + acetyl-CoA = N(6)-acetyl-L-lysyl-[protein] + CoA + H(+)</text>
        <dbReference type="Rhea" id="RHEA:45948"/>
        <dbReference type="Rhea" id="RHEA-COMP:9752"/>
        <dbReference type="Rhea" id="RHEA-COMP:10731"/>
        <dbReference type="ChEBI" id="CHEBI:15378"/>
        <dbReference type="ChEBI" id="CHEBI:29969"/>
        <dbReference type="ChEBI" id="CHEBI:57287"/>
        <dbReference type="ChEBI" id="CHEBI:57288"/>
        <dbReference type="ChEBI" id="CHEBI:61930"/>
    </reaction>
    <physiologicalReaction direction="left-to-right" evidence="3">
        <dbReference type="Rhea" id="RHEA:45949"/>
    </physiologicalReaction>
</comment>
<comment type="catalytic activity">
    <reaction evidence="2">
        <text>2-hydroxyisobutanoyl-CoA + L-lysyl-[protein] = N(6)-(2-hydroxyisobutanoyl)-L-lysyl-[protein] + CoA + H(+)</text>
        <dbReference type="Rhea" id="RHEA:24180"/>
        <dbReference type="Rhea" id="RHEA-COMP:9752"/>
        <dbReference type="Rhea" id="RHEA-COMP:15921"/>
        <dbReference type="ChEBI" id="CHEBI:15378"/>
        <dbReference type="ChEBI" id="CHEBI:29969"/>
        <dbReference type="ChEBI" id="CHEBI:57287"/>
        <dbReference type="ChEBI" id="CHEBI:131780"/>
        <dbReference type="ChEBI" id="CHEBI:144968"/>
    </reaction>
    <physiologicalReaction direction="left-to-right" evidence="2">
        <dbReference type="Rhea" id="RHEA:24181"/>
    </physiologicalReaction>
</comment>
<comment type="catalytic activity">
    <reaction evidence="3">
        <text>(2E)-butenoyl-CoA + L-lysyl-[protein] = N(6)-(2E)-butenoyl-L-lysyl-[protein] + CoA + H(+)</text>
        <dbReference type="Rhea" id="RHEA:53908"/>
        <dbReference type="Rhea" id="RHEA-COMP:9752"/>
        <dbReference type="Rhea" id="RHEA-COMP:13707"/>
        <dbReference type="ChEBI" id="CHEBI:15378"/>
        <dbReference type="ChEBI" id="CHEBI:29969"/>
        <dbReference type="ChEBI" id="CHEBI:57287"/>
        <dbReference type="ChEBI" id="CHEBI:57332"/>
        <dbReference type="ChEBI" id="CHEBI:137954"/>
    </reaction>
    <physiologicalReaction direction="left-to-right" evidence="3">
        <dbReference type="Rhea" id="RHEA:53909"/>
    </physiologicalReaction>
</comment>
<comment type="subunit">
    <text evidence="3">Component of the NuA4 histone acetyltransferase complex.</text>
</comment>
<comment type="subcellular location">
    <subcellularLocation>
        <location evidence="2">Nucleus</location>
    </subcellularLocation>
    <subcellularLocation>
        <location evidence="2">Chromosome</location>
    </subcellularLocation>
    <text evidence="2">Following DNA damage, localizes to sites of DNA damage, such as double stand breaks (DSBs).</text>
</comment>
<comment type="domain">
    <text evidence="3">The ESA1-RPD3 motif is common to ESA1 and RPD3 and is required for ESA1 histone acetyl-transferase (HAT) activity and RPD3 histone deacetylase (HDAC) activity.</text>
</comment>
<comment type="PTM">
    <text evidence="3">Autoacetylation at Lys-320 is required for proper function.</text>
</comment>
<comment type="similarity">
    <text evidence="7">Belongs to the MYST (SAS/MOZ) family.</text>
</comment>